<comment type="function">
    <text evidence="1">Catalyzes the ATP-dependent phosphorylation of L-homoserine to L-homoserine phosphate.</text>
</comment>
<comment type="catalytic activity">
    <reaction evidence="1">
        <text>L-homoserine + ATP = O-phospho-L-homoserine + ADP + H(+)</text>
        <dbReference type="Rhea" id="RHEA:13985"/>
        <dbReference type="ChEBI" id="CHEBI:15378"/>
        <dbReference type="ChEBI" id="CHEBI:30616"/>
        <dbReference type="ChEBI" id="CHEBI:57476"/>
        <dbReference type="ChEBI" id="CHEBI:57590"/>
        <dbReference type="ChEBI" id="CHEBI:456216"/>
        <dbReference type="EC" id="2.7.1.39"/>
    </reaction>
</comment>
<comment type="pathway">
    <text evidence="1">Amino-acid biosynthesis; L-threonine biosynthesis; L-threonine from L-aspartate: step 4/5.</text>
</comment>
<comment type="subcellular location">
    <subcellularLocation>
        <location evidence="1">Cytoplasm</location>
    </subcellularLocation>
</comment>
<comment type="similarity">
    <text evidence="1">Belongs to the GHMP kinase family. Homoserine kinase subfamily.</text>
</comment>
<protein>
    <recommendedName>
        <fullName evidence="1">Homoserine kinase</fullName>
        <shortName evidence="1">HK</shortName>
        <shortName evidence="1">HSK</shortName>
        <ecNumber evidence="1">2.7.1.39</ecNumber>
    </recommendedName>
</protein>
<evidence type="ECO:0000255" key="1">
    <source>
        <dbReference type="HAMAP-Rule" id="MF_00384"/>
    </source>
</evidence>
<name>KHSE_MYCS2</name>
<reference key="1">
    <citation type="submission" date="2006-10" db="EMBL/GenBank/DDBJ databases">
        <authorList>
            <person name="Fleischmann R.D."/>
            <person name="Dodson R.J."/>
            <person name="Haft D.H."/>
            <person name="Merkel J.S."/>
            <person name="Nelson W.C."/>
            <person name="Fraser C.M."/>
        </authorList>
    </citation>
    <scope>NUCLEOTIDE SEQUENCE [LARGE SCALE GENOMIC DNA]</scope>
    <source>
        <strain>ATCC 700084 / mc(2)155</strain>
    </source>
</reference>
<reference key="2">
    <citation type="journal article" date="2007" name="Genome Biol.">
        <title>Interrupted coding sequences in Mycobacterium smegmatis: authentic mutations or sequencing errors?</title>
        <authorList>
            <person name="Deshayes C."/>
            <person name="Perrodou E."/>
            <person name="Gallien S."/>
            <person name="Euphrasie D."/>
            <person name="Schaeffer C."/>
            <person name="Van-Dorsselaer A."/>
            <person name="Poch O."/>
            <person name="Lecompte O."/>
            <person name="Reyrat J.-M."/>
        </authorList>
    </citation>
    <scope>NUCLEOTIDE SEQUENCE [LARGE SCALE GENOMIC DNA]</scope>
    <source>
        <strain>ATCC 700084 / mc(2)155</strain>
    </source>
</reference>
<reference key="3">
    <citation type="journal article" date="2009" name="Genome Res.">
        <title>Ortho-proteogenomics: multiple proteomes investigation through orthology and a new MS-based protocol.</title>
        <authorList>
            <person name="Gallien S."/>
            <person name="Perrodou E."/>
            <person name="Carapito C."/>
            <person name="Deshayes C."/>
            <person name="Reyrat J.-M."/>
            <person name="Van Dorsselaer A."/>
            <person name="Poch O."/>
            <person name="Schaeffer C."/>
            <person name="Lecompte O."/>
        </authorList>
    </citation>
    <scope>NUCLEOTIDE SEQUENCE [LARGE SCALE GENOMIC DNA]</scope>
    <source>
        <strain>ATCC 700084 / mc(2)155</strain>
    </source>
</reference>
<keyword id="KW-0028">Amino-acid biosynthesis</keyword>
<keyword id="KW-0067">ATP-binding</keyword>
<keyword id="KW-0963">Cytoplasm</keyword>
<keyword id="KW-0418">Kinase</keyword>
<keyword id="KW-0547">Nucleotide-binding</keyword>
<keyword id="KW-1185">Reference proteome</keyword>
<keyword id="KW-0791">Threonine biosynthesis</keyword>
<keyword id="KW-0808">Transferase</keyword>
<dbReference type="EC" id="2.7.1.39" evidence="1"/>
<dbReference type="EMBL" id="CP000480">
    <property type="protein sequence ID" value="ABK72678.1"/>
    <property type="molecule type" value="Genomic_DNA"/>
</dbReference>
<dbReference type="EMBL" id="CP001663">
    <property type="protein sequence ID" value="AFP41273.1"/>
    <property type="molecule type" value="Genomic_DNA"/>
</dbReference>
<dbReference type="RefSeq" id="WP_011730210.1">
    <property type="nucleotide sequence ID" value="NZ_SIJM01000019.1"/>
</dbReference>
<dbReference type="RefSeq" id="YP_889207.1">
    <property type="nucleotide sequence ID" value="NC_008596.1"/>
</dbReference>
<dbReference type="SMR" id="A0R219"/>
<dbReference type="STRING" id="246196.MSMEG_4955"/>
<dbReference type="PaxDb" id="246196-MSMEI_4828"/>
<dbReference type="GeneID" id="93459622"/>
<dbReference type="KEGG" id="msb:LJ00_24500"/>
<dbReference type="KEGG" id="msg:MSMEI_4828"/>
<dbReference type="KEGG" id="msm:MSMEG_4955"/>
<dbReference type="PATRIC" id="fig|246196.19.peg.4834"/>
<dbReference type="eggNOG" id="COG0083">
    <property type="taxonomic scope" value="Bacteria"/>
</dbReference>
<dbReference type="OrthoDB" id="9769912at2"/>
<dbReference type="UniPathway" id="UPA00050">
    <property type="reaction ID" value="UER00064"/>
</dbReference>
<dbReference type="Proteomes" id="UP000000757">
    <property type="component" value="Chromosome"/>
</dbReference>
<dbReference type="Proteomes" id="UP000006158">
    <property type="component" value="Chromosome"/>
</dbReference>
<dbReference type="GO" id="GO:0005737">
    <property type="term" value="C:cytoplasm"/>
    <property type="evidence" value="ECO:0007669"/>
    <property type="project" value="UniProtKB-SubCell"/>
</dbReference>
<dbReference type="GO" id="GO:0005524">
    <property type="term" value="F:ATP binding"/>
    <property type="evidence" value="ECO:0007669"/>
    <property type="project" value="UniProtKB-UniRule"/>
</dbReference>
<dbReference type="GO" id="GO:0004413">
    <property type="term" value="F:homoserine kinase activity"/>
    <property type="evidence" value="ECO:0007669"/>
    <property type="project" value="UniProtKB-UniRule"/>
</dbReference>
<dbReference type="GO" id="GO:0009088">
    <property type="term" value="P:threonine biosynthetic process"/>
    <property type="evidence" value="ECO:0007669"/>
    <property type="project" value="UniProtKB-UniRule"/>
</dbReference>
<dbReference type="Gene3D" id="3.30.230.10">
    <property type="match status" value="1"/>
</dbReference>
<dbReference type="Gene3D" id="3.30.70.890">
    <property type="entry name" value="GHMP kinase, C-terminal domain"/>
    <property type="match status" value="1"/>
</dbReference>
<dbReference type="HAMAP" id="MF_00384">
    <property type="entry name" value="Homoser_kinase"/>
    <property type="match status" value="1"/>
</dbReference>
<dbReference type="InterPro" id="IPR013750">
    <property type="entry name" value="GHMP_kinase_C_dom"/>
</dbReference>
<dbReference type="InterPro" id="IPR036554">
    <property type="entry name" value="GHMP_kinase_C_sf"/>
</dbReference>
<dbReference type="InterPro" id="IPR006204">
    <property type="entry name" value="GHMP_kinase_N_dom"/>
</dbReference>
<dbReference type="InterPro" id="IPR006203">
    <property type="entry name" value="GHMP_knse_ATP-bd_CS"/>
</dbReference>
<dbReference type="InterPro" id="IPR000870">
    <property type="entry name" value="Homoserine_kinase"/>
</dbReference>
<dbReference type="InterPro" id="IPR020568">
    <property type="entry name" value="Ribosomal_Su5_D2-typ_SF"/>
</dbReference>
<dbReference type="InterPro" id="IPR014721">
    <property type="entry name" value="Ribsml_uS5_D2-typ_fold_subgr"/>
</dbReference>
<dbReference type="NCBIfam" id="TIGR00191">
    <property type="entry name" value="thrB"/>
    <property type="match status" value="1"/>
</dbReference>
<dbReference type="PANTHER" id="PTHR20861:SF1">
    <property type="entry name" value="HOMOSERINE KINASE"/>
    <property type="match status" value="1"/>
</dbReference>
<dbReference type="PANTHER" id="PTHR20861">
    <property type="entry name" value="HOMOSERINE/4-DIPHOSPHOCYTIDYL-2-C-METHYL-D-ERYTHRITOL KINASE"/>
    <property type="match status" value="1"/>
</dbReference>
<dbReference type="Pfam" id="PF08544">
    <property type="entry name" value="GHMP_kinases_C"/>
    <property type="match status" value="1"/>
</dbReference>
<dbReference type="Pfam" id="PF00288">
    <property type="entry name" value="GHMP_kinases_N"/>
    <property type="match status" value="1"/>
</dbReference>
<dbReference type="PIRSF" id="PIRSF000676">
    <property type="entry name" value="Homoser_kin"/>
    <property type="match status" value="1"/>
</dbReference>
<dbReference type="PRINTS" id="PR00958">
    <property type="entry name" value="HOMSERKINASE"/>
</dbReference>
<dbReference type="SUPFAM" id="SSF55060">
    <property type="entry name" value="GHMP Kinase, C-terminal domain"/>
    <property type="match status" value="1"/>
</dbReference>
<dbReference type="SUPFAM" id="SSF54211">
    <property type="entry name" value="Ribosomal protein S5 domain 2-like"/>
    <property type="match status" value="1"/>
</dbReference>
<dbReference type="PROSITE" id="PS00627">
    <property type="entry name" value="GHMP_KINASES_ATP"/>
    <property type="match status" value="1"/>
</dbReference>
<sequence>MTQTLPVGLSATSVVAASSANLGPGFDSLGIALSLYDEIVVETVESGLTVHVEGEGAGQVPLDQTHLVVRAINKGLQAAGFSAPGLVVRCRNDIPHSRGLGSSAAAVVGGLAAVNGLVTQAGSEPMDDARLIQLSSEFEGHPDNAAAAVLGGAVVSWTEQAGAFGGEPRYSAVPVRLHPDIRLFPAVPQQRSSTAETRVLLPEQVSHVDARFNLSRAALLVVALSERPDLLMAATEDVLHQPQRAAAMPASAEYLAILRRCGIAAVLSGAGPSVLGLSAQSGLPAEALEYGTAHGFTVTEMSVGAGVRWTAGAVVRN</sequence>
<organism>
    <name type="scientific">Mycolicibacterium smegmatis (strain ATCC 700084 / mc(2)155)</name>
    <name type="common">Mycobacterium smegmatis</name>
    <dbReference type="NCBI Taxonomy" id="246196"/>
    <lineage>
        <taxon>Bacteria</taxon>
        <taxon>Bacillati</taxon>
        <taxon>Actinomycetota</taxon>
        <taxon>Actinomycetes</taxon>
        <taxon>Mycobacteriales</taxon>
        <taxon>Mycobacteriaceae</taxon>
        <taxon>Mycolicibacterium</taxon>
    </lineage>
</organism>
<proteinExistence type="inferred from homology"/>
<accession>A0R219</accession>
<accession>I7FR76</accession>
<gene>
    <name evidence="1" type="primary">thrB</name>
    <name type="ordered locus">MSMEG_4955</name>
    <name type="ordered locus">MSMEI_4828</name>
</gene>
<feature type="chain" id="PRO_1000049147" description="Homoserine kinase">
    <location>
        <begin position="1"/>
        <end position="317"/>
    </location>
</feature>
<feature type="binding site" evidence="1">
    <location>
        <begin position="95"/>
        <end position="105"/>
    </location>
    <ligand>
        <name>ATP</name>
        <dbReference type="ChEBI" id="CHEBI:30616"/>
    </ligand>
</feature>